<feature type="chain" id="PRO_0000074063" description="UDP-glucose 6-dehydrogenase">
    <location>
        <begin position="1"/>
        <end position="481"/>
    </location>
</feature>
<feature type="active site" description="Nucleophile" evidence="2">
    <location>
        <position position="283"/>
    </location>
</feature>
<feature type="binding site" evidence="2">
    <location>
        <begin position="16"/>
        <end position="21"/>
    </location>
    <ligand>
        <name>NAD(+)</name>
        <dbReference type="ChEBI" id="CHEBI:57540"/>
    </ligand>
</feature>
<feature type="binding site" evidence="2">
    <location>
        <position position="41"/>
    </location>
    <ligand>
        <name>NAD(+)</name>
        <dbReference type="ChEBI" id="CHEBI:57540"/>
    </ligand>
</feature>
<feature type="binding site" evidence="1">
    <location>
        <position position="46"/>
    </location>
    <ligand>
        <name>NAD(+)</name>
        <dbReference type="ChEBI" id="CHEBI:57540"/>
    </ligand>
</feature>
<feature type="binding site" evidence="2">
    <location>
        <begin position="94"/>
        <end position="98"/>
    </location>
    <ligand>
        <name>NAD(+)</name>
        <dbReference type="ChEBI" id="CHEBI:57540"/>
    </ligand>
</feature>
<feature type="binding site" evidence="2">
    <location>
        <begin position="135"/>
        <end position="136"/>
    </location>
    <ligand>
        <name>NAD(+)</name>
        <dbReference type="ChEBI" id="CHEBI:57540"/>
    </ligand>
</feature>
<feature type="binding site" evidence="2">
    <location>
        <begin position="168"/>
        <end position="172"/>
    </location>
    <ligand>
        <name>substrate</name>
    </ligand>
</feature>
<feature type="binding site" evidence="2">
    <location>
        <position position="172"/>
    </location>
    <ligand>
        <name>NAD(+)</name>
        <dbReference type="ChEBI" id="CHEBI:57540"/>
    </ligand>
</feature>
<feature type="binding site" evidence="2">
    <location>
        <begin position="227"/>
        <end position="231"/>
    </location>
    <ligand>
        <name>substrate</name>
    </ligand>
</feature>
<feature type="binding site" evidence="2">
    <location>
        <position position="267"/>
    </location>
    <ligand>
        <name>substrate</name>
    </ligand>
</feature>
<feature type="binding site" evidence="2">
    <location>
        <begin position="274"/>
        <end position="280"/>
    </location>
    <ligand>
        <name>substrate</name>
    </ligand>
</feature>
<feature type="binding site" evidence="2">
    <location>
        <begin position="283"/>
        <end position="286"/>
    </location>
    <ligand>
        <name>NAD(+)</name>
        <dbReference type="ChEBI" id="CHEBI:57540"/>
    </ligand>
</feature>
<feature type="binding site" evidence="2">
    <location>
        <begin position="345"/>
        <end position="346"/>
    </location>
    <ligand>
        <name>substrate</name>
    </ligand>
</feature>
<feature type="binding site" evidence="2">
    <location>
        <position position="353"/>
    </location>
    <ligand>
        <name>NAD(+)</name>
        <dbReference type="ChEBI" id="CHEBI:57540"/>
    </ligand>
</feature>
<feature type="binding site" evidence="2">
    <location>
        <position position="447"/>
    </location>
    <ligand>
        <name>substrate</name>
    </ligand>
</feature>
<feature type="mutagenesis site" description="In n2827; defects in vulva morphogenesis during L4 larval stage." evidence="3">
    <original>R</original>
    <variation>H</variation>
    <location>
        <position position="353"/>
    </location>
</feature>
<feature type="strand" evidence="8">
    <location>
        <begin position="4"/>
        <end position="6"/>
    </location>
</feature>
<feature type="strand" evidence="7">
    <location>
        <begin position="11"/>
        <end position="15"/>
    </location>
</feature>
<feature type="helix" evidence="7">
    <location>
        <begin position="21"/>
        <end position="31"/>
    </location>
</feature>
<feature type="strand" evidence="7">
    <location>
        <begin position="35"/>
        <end position="40"/>
    </location>
</feature>
<feature type="helix" evidence="7">
    <location>
        <begin position="44"/>
        <end position="50"/>
    </location>
</feature>
<feature type="strand" evidence="7">
    <location>
        <begin position="52"/>
        <end position="54"/>
    </location>
</feature>
<feature type="helix" evidence="7">
    <location>
        <begin position="62"/>
        <end position="69"/>
    </location>
</feature>
<feature type="turn" evidence="7">
    <location>
        <begin position="71"/>
        <end position="73"/>
    </location>
</feature>
<feature type="strand" evidence="7">
    <location>
        <begin position="74"/>
        <end position="78"/>
    </location>
</feature>
<feature type="helix" evidence="7">
    <location>
        <begin position="80"/>
        <end position="86"/>
    </location>
</feature>
<feature type="strand" evidence="7">
    <location>
        <begin position="88"/>
        <end position="92"/>
    </location>
</feature>
<feature type="strand" evidence="8">
    <location>
        <begin position="100"/>
        <end position="102"/>
    </location>
</feature>
<feature type="turn" evidence="7">
    <location>
        <begin position="103"/>
        <end position="107"/>
    </location>
</feature>
<feature type="helix" evidence="7">
    <location>
        <begin position="112"/>
        <end position="124"/>
    </location>
</feature>
<feature type="strand" evidence="7">
    <location>
        <begin position="129"/>
        <end position="133"/>
    </location>
</feature>
<feature type="helix" evidence="7">
    <location>
        <begin position="141"/>
        <end position="152"/>
    </location>
</feature>
<feature type="strand" evidence="7">
    <location>
        <begin position="161"/>
        <end position="165"/>
    </location>
</feature>
<feature type="helix" evidence="7">
    <location>
        <begin position="175"/>
        <end position="180"/>
    </location>
</feature>
<feature type="strand" evidence="7">
    <location>
        <begin position="185"/>
        <end position="189"/>
    </location>
</feature>
<feature type="helix" evidence="7">
    <location>
        <begin position="193"/>
        <end position="207"/>
    </location>
</feature>
<feature type="helix" evidence="7">
    <location>
        <begin position="212"/>
        <end position="214"/>
    </location>
</feature>
<feature type="strand" evidence="7">
    <location>
        <begin position="215"/>
        <end position="219"/>
    </location>
</feature>
<feature type="helix" evidence="7">
    <location>
        <begin position="220"/>
        <end position="251"/>
    </location>
</feature>
<feature type="helix" evidence="7">
    <location>
        <begin position="255"/>
        <end position="263"/>
    </location>
</feature>
<feature type="turn" evidence="7">
    <location>
        <begin position="266"/>
        <end position="268"/>
    </location>
</feature>
<feature type="strand" evidence="7">
    <location>
        <begin position="270"/>
        <end position="272"/>
    </location>
</feature>
<feature type="strand" evidence="7">
    <location>
        <begin position="281"/>
        <end position="283"/>
    </location>
</feature>
<feature type="helix" evidence="7">
    <location>
        <begin position="284"/>
        <end position="297"/>
    </location>
</feature>
<feature type="helix" evidence="7">
    <location>
        <begin position="301"/>
        <end position="328"/>
    </location>
</feature>
<feature type="turn" evidence="7">
    <location>
        <begin position="329"/>
        <end position="331"/>
    </location>
</feature>
<feature type="strand" evidence="7">
    <location>
        <begin position="337"/>
        <end position="341"/>
    </location>
</feature>
<feature type="strand" evidence="7">
    <location>
        <begin position="344"/>
        <end position="346"/>
    </location>
</feature>
<feature type="helix" evidence="7">
    <location>
        <begin position="356"/>
        <end position="366"/>
    </location>
</feature>
<feature type="strand" evidence="7">
    <location>
        <begin position="370"/>
        <end position="374"/>
    </location>
</feature>
<feature type="strand" evidence="7">
    <location>
        <begin position="376"/>
        <end position="378"/>
    </location>
</feature>
<feature type="helix" evidence="7">
    <location>
        <begin position="380"/>
        <end position="390"/>
    </location>
</feature>
<feature type="helix" evidence="7">
    <location>
        <begin position="393"/>
        <end position="399"/>
    </location>
</feature>
<feature type="strand" evidence="7">
    <location>
        <begin position="400"/>
        <end position="405"/>
    </location>
</feature>
<feature type="helix" evidence="7">
    <location>
        <begin position="406"/>
        <end position="410"/>
    </location>
</feature>
<feature type="strand" evidence="7">
    <location>
        <begin position="414"/>
        <end position="418"/>
    </location>
</feature>
<feature type="helix" evidence="7">
    <location>
        <begin position="423"/>
        <end position="425"/>
    </location>
</feature>
<feature type="helix" evidence="7">
    <location>
        <begin position="430"/>
        <end position="436"/>
    </location>
</feature>
<feature type="strand" evidence="7">
    <location>
        <begin position="442"/>
        <end position="448"/>
    </location>
</feature>
<feature type="helix" evidence="7">
    <location>
        <begin position="452"/>
        <end position="458"/>
    </location>
</feature>
<feature type="strand" evidence="7">
    <location>
        <begin position="461"/>
        <end position="464"/>
    </location>
</feature>
<accession>Q19905</accession>
<evidence type="ECO:0000250" key="1"/>
<evidence type="ECO:0000250" key="2">
    <source>
        <dbReference type="UniProtKB" id="O60701"/>
    </source>
</evidence>
<evidence type="ECO:0000269" key="3">
    <source>
    </source>
</evidence>
<evidence type="ECO:0000269" key="4">
    <source>
    </source>
</evidence>
<evidence type="ECO:0000305" key="5"/>
<evidence type="ECO:0000305" key="6">
    <source>
    </source>
</evidence>
<evidence type="ECO:0007829" key="7">
    <source>
        <dbReference type="PDB" id="2O3J"/>
    </source>
</evidence>
<evidence type="ECO:0007829" key="8">
    <source>
        <dbReference type="PDB" id="6OM8"/>
    </source>
</evidence>
<sequence length="481" mass="52755">MTDQVFGKVSKVVCVGAGYVGGPTCAMIAHKCPHITVTVVDMNTAKIAEWNSDKLPIYEPGLDEIVFAARGRNLFFSSDIPKAIAEADLIFISVNTPTKMYGRGKGMAPDLKYVESVSRTIAQYAGGPKIVVEKSTVPVKAAESIGCILREAQKNNENLKFQVLSNPEFLAEGTAMKDLANPDRVLIGGESSPEGLQAVAELVRIYENWVPRNRIITTNTWSSELSKLVANAFLAQRISSINSISAVCEATGAEISEVAHAVGYDTRIGSKFLQASVGFGGSCFQKDVLSLVYLCESLNLPQVADYWQGVININNWQRRRFADKIIAELFNTVTDKKIAIFGFAFKKNTGDTRESSAIHVIKHLMEEHAKLSVYDPKVQKSQMLNDLASVTSAQDVERLITVESDPYAAARGAHAIVVLTEWDEFVELNYSQIHNDMQHPAAIFDGRLILDQKALREIGFRTFAIGTSPDQAYNLFGTAGY</sequence>
<reference key="1">
    <citation type="journal article" date="2002" name="Proc. Natl. Acad. Sci. U.S.A.">
        <title>The Caenorhabditis elegans vulval morphogenesis gene sqv-4 encodes a UDP-glucose dehydrogenase that is temporally and spatially regulated.</title>
        <authorList>
            <person name="Hwang H.Y."/>
            <person name="Horvitz H.R."/>
        </authorList>
    </citation>
    <scope>NUCLEOTIDE SEQUENCE [MRNA]</scope>
    <scope>FUNCTION</scope>
    <scope>CATALYTIC ACTIVITY</scope>
    <scope>BIOPHYSICOCHEMICAL PROPERTIES</scope>
    <scope>TISSUE SPECIFICITY</scope>
    <scope>DEVELOPMENTAL STAGE</scope>
    <scope>MUTAGENESIS OF ARG-353</scope>
</reference>
<reference key="2">
    <citation type="journal article" date="1998" name="Science">
        <title>Genome sequence of the nematode C. elegans: a platform for investigating biology.</title>
        <authorList>
            <consortium name="The C. elegans sequencing consortium"/>
        </authorList>
    </citation>
    <scope>NUCLEOTIDE SEQUENCE [LARGE SCALE GENOMIC DNA]</scope>
    <source>
        <strain>Bristol N2</strain>
    </source>
</reference>
<reference key="3">
    <citation type="journal article" date="2007" name="Development">
        <title>Cortical granule exocytosis in C. elegans is regulated by cell cycle components including separase.</title>
        <authorList>
            <person name="Bembenek J.N."/>
            <person name="Richie C.T."/>
            <person name="Squirrell J.M."/>
            <person name="Campbell J.M."/>
            <person name="Eliceiri K.W."/>
            <person name="Poteryaev D."/>
            <person name="Spang A."/>
            <person name="Golden A."/>
            <person name="White J.G."/>
        </authorList>
    </citation>
    <scope>DISRUPTION PHENOTYPE</scope>
</reference>
<reference key="4">
    <citation type="submission" date="2009-02" db="PDB data bank">
        <title>Crystal structure of caenorhabditis elegans udp-glucose dehydrogenase.</title>
        <authorList>
            <consortium name="New York structural genomix research consortium (NYSGXRC)"/>
        </authorList>
    </citation>
    <scope>X-RAY CRYSTALLOGRAPHY (1.88 ANGSTROMS)</scope>
</reference>
<proteinExistence type="evidence at protein level"/>
<comment type="function">
    <text evidence="3">Involved in the biosynthesis of glycosaminoglycans; hyaluronan, chondroitin sulfate, and heparan sulfate.</text>
</comment>
<comment type="catalytic activity">
    <reaction evidence="3">
        <text>UDP-alpha-D-glucose + 2 NAD(+) + H2O = UDP-alpha-D-glucuronate + 2 NADH + 3 H(+)</text>
        <dbReference type="Rhea" id="RHEA:23596"/>
        <dbReference type="ChEBI" id="CHEBI:15377"/>
        <dbReference type="ChEBI" id="CHEBI:15378"/>
        <dbReference type="ChEBI" id="CHEBI:57540"/>
        <dbReference type="ChEBI" id="CHEBI:57945"/>
        <dbReference type="ChEBI" id="CHEBI:58052"/>
        <dbReference type="ChEBI" id="CHEBI:58885"/>
        <dbReference type="EC" id="1.1.1.22"/>
    </reaction>
</comment>
<comment type="biophysicochemical properties">
    <kinetics>
        <KM evidence="3">0.2 mM for UDP-glucose at 22 degrees Celsius</KM>
        <KM evidence="3">0.2 mM for NAD(+)at 22 degrees Celsius</KM>
    </kinetics>
</comment>
<comment type="pathway">
    <text evidence="6">Nucleotide-sugar biosynthesis; UDP-alpha-D-glucuronate biosynthesis; UDP-alpha-D-glucuronate from UDP-alpha-D-glucose: step 1/1.</text>
</comment>
<comment type="interaction">
    <interactant intactId="EBI-320696">
        <id>Q19905</id>
    </interactant>
    <interactant intactId="EBI-320696">
        <id>Q19905</id>
        <label>sqv-4</label>
    </interactant>
    <organismsDiffer>false</organismsDiffer>
    <experiments>3</experiments>
</comment>
<comment type="tissue specificity">
    <text evidence="3">Expressed in the vulva and in oocytes.</text>
</comment>
<comment type="developmental stage">
    <text evidence="3">Expression increases in a subset of vulva precursor cells during middle and late L4 larval stage.</text>
</comment>
<comment type="disruption phenotype">
    <text evidence="4">RNAi-mediated knockdown causes a reduction in the size of cortical granules during the first meiotic division.</text>
</comment>
<comment type="similarity">
    <text evidence="5">Belongs to the UDP-glucose/GDP-mannose dehydrogenase family.</text>
</comment>
<name>UGDH_CAEEL</name>
<dbReference type="EC" id="1.1.1.22" evidence="3"/>
<dbReference type="EMBL" id="AY147932">
    <property type="protein sequence ID" value="AAN39842.1"/>
    <property type="molecule type" value="mRNA"/>
</dbReference>
<dbReference type="EMBL" id="Z73974">
    <property type="protein sequence ID" value="CAA98269.1"/>
    <property type="molecule type" value="Genomic_DNA"/>
</dbReference>
<dbReference type="PIR" id="T21550">
    <property type="entry name" value="T21550"/>
</dbReference>
<dbReference type="RefSeq" id="NP_505730.1">
    <property type="nucleotide sequence ID" value="NM_073329.11"/>
</dbReference>
<dbReference type="PDB" id="2O3J">
    <property type="method" value="X-ray"/>
    <property type="resolution" value="1.88 A"/>
    <property type="chains" value="A/B/C=1-481"/>
</dbReference>
<dbReference type="PDB" id="6OM8">
    <property type="method" value="X-ray"/>
    <property type="resolution" value="2.45 A"/>
    <property type="chains" value="A/B/C/D/E/F/G/H/I/J/K/L=1-481"/>
</dbReference>
<dbReference type="PDBsum" id="2O3J"/>
<dbReference type="PDBsum" id="6OM8"/>
<dbReference type="SMR" id="Q19905"/>
<dbReference type="BioGRID" id="44513">
    <property type="interactions" value="24"/>
</dbReference>
<dbReference type="DIP" id="DIP-24290N"/>
<dbReference type="FunCoup" id="Q19905">
    <property type="interactions" value="1861"/>
</dbReference>
<dbReference type="IntAct" id="Q19905">
    <property type="interactions" value="18"/>
</dbReference>
<dbReference type="STRING" id="6239.F29F11.1.1"/>
<dbReference type="PaxDb" id="6239-F29F11.1"/>
<dbReference type="PeptideAtlas" id="Q19905"/>
<dbReference type="EnsemblMetazoa" id="F29F11.1.1">
    <property type="protein sequence ID" value="F29F11.1.1"/>
    <property type="gene ID" value="WBGene00005022"/>
</dbReference>
<dbReference type="GeneID" id="179484"/>
<dbReference type="KEGG" id="cel:CELE_F29F11.1"/>
<dbReference type="UCSC" id="F29F11.1.1">
    <property type="organism name" value="c. elegans"/>
</dbReference>
<dbReference type="AGR" id="WB:WBGene00005022"/>
<dbReference type="CTD" id="179484"/>
<dbReference type="WormBase" id="F29F11.1">
    <property type="protein sequence ID" value="CE05767"/>
    <property type="gene ID" value="WBGene00005022"/>
    <property type="gene designation" value="sqv-4"/>
</dbReference>
<dbReference type="eggNOG" id="KOG2666">
    <property type="taxonomic scope" value="Eukaryota"/>
</dbReference>
<dbReference type="GeneTree" id="ENSGT00390000015355"/>
<dbReference type="HOGENOM" id="CLU_023810_7_0_1"/>
<dbReference type="InParanoid" id="Q19905"/>
<dbReference type="OMA" id="CFIAVGT"/>
<dbReference type="OrthoDB" id="5059218at2759"/>
<dbReference type="PhylomeDB" id="Q19905"/>
<dbReference type="BRENDA" id="1.1.1.22">
    <property type="organism ID" value="1045"/>
</dbReference>
<dbReference type="Reactome" id="R-CEL-173599">
    <property type="pathway name" value="Formation of the active cofactor, UDP-glucuronate"/>
</dbReference>
<dbReference type="SignaLink" id="Q19905"/>
<dbReference type="UniPathway" id="UPA00038">
    <property type="reaction ID" value="UER00491"/>
</dbReference>
<dbReference type="EvolutionaryTrace" id="Q19905"/>
<dbReference type="PRO" id="PR:Q19905"/>
<dbReference type="Proteomes" id="UP000001940">
    <property type="component" value="Chromosome V"/>
</dbReference>
<dbReference type="Bgee" id="WBGene00005022">
    <property type="expression patterns" value="Expressed in germ line (C elegans) and 4 other cell types or tissues"/>
</dbReference>
<dbReference type="GO" id="GO:0005737">
    <property type="term" value="C:cytoplasm"/>
    <property type="evidence" value="ECO:0000314"/>
    <property type="project" value="WormBase"/>
</dbReference>
<dbReference type="GO" id="GO:0005634">
    <property type="term" value="C:nucleus"/>
    <property type="evidence" value="ECO:0000318"/>
    <property type="project" value="GO_Central"/>
</dbReference>
<dbReference type="GO" id="GO:0042802">
    <property type="term" value="F:identical protein binding"/>
    <property type="evidence" value="ECO:0000353"/>
    <property type="project" value="IntAct"/>
</dbReference>
<dbReference type="GO" id="GO:0051287">
    <property type="term" value="F:NAD binding"/>
    <property type="evidence" value="ECO:0007669"/>
    <property type="project" value="InterPro"/>
</dbReference>
<dbReference type="GO" id="GO:0003979">
    <property type="term" value="F:UDP-glucose 6-dehydrogenase activity"/>
    <property type="evidence" value="ECO:0000314"/>
    <property type="project" value="WormBase"/>
</dbReference>
<dbReference type="GO" id="GO:0018991">
    <property type="term" value="P:egg-laying behavior"/>
    <property type="evidence" value="ECO:0000315"/>
    <property type="project" value="WormBase"/>
</dbReference>
<dbReference type="GO" id="GO:0009792">
    <property type="term" value="P:embryo development ending in birth or egg hatching"/>
    <property type="evidence" value="ECO:0000315"/>
    <property type="project" value="WormBase"/>
</dbReference>
<dbReference type="GO" id="GO:0006024">
    <property type="term" value="P:glycosaminoglycan biosynthetic process"/>
    <property type="evidence" value="ECO:0000314"/>
    <property type="project" value="WormBase"/>
</dbReference>
<dbReference type="GO" id="GO:0002009">
    <property type="term" value="P:morphogenesis of an epithelium"/>
    <property type="evidence" value="ECO:0000315"/>
    <property type="project" value="WormBase"/>
</dbReference>
<dbReference type="GO" id="GO:0022414">
    <property type="term" value="P:reproductive process"/>
    <property type="evidence" value="ECO:0000315"/>
    <property type="project" value="WormBase"/>
</dbReference>
<dbReference type="GO" id="GO:0006065">
    <property type="term" value="P:UDP-glucuronate biosynthetic process"/>
    <property type="evidence" value="ECO:0007669"/>
    <property type="project" value="UniProtKB-UniPathway"/>
</dbReference>
<dbReference type="GO" id="GO:0040025">
    <property type="term" value="P:vulval development"/>
    <property type="evidence" value="ECO:0000315"/>
    <property type="project" value="WormBase"/>
</dbReference>
<dbReference type="FunFam" id="1.20.5.100:FF:000001">
    <property type="entry name" value="UDP-glucose 6-dehydrogenase"/>
    <property type="match status" value="1"/>
</dbReference>
<dbReference type="FunFam" id="3.40.50.720:FF:000032">
    <property type="entry name" value="UDP-glucose 6-dehydrogenase"/>
    <property type="match status" value="1"/>
</dbReference>
<dbReference type="FunFam" id="3.40.50.720:FF:000114">
    <property type="entry name" value="UDP-glucose 6-dehydrogenase"/>
    <property type="match status" value="1"/>
</dbReference>
<dbReference type="Gene3D" id="1.20.5.100">
    <property type="entry name" value="Cytochrome c1, transmembrane anchor, C-terminal"/>
    <property type="match status" value="1"/>
</dbReference>
<dbReference type="Gene3D" id="3.40.50.720">
    <property type="entry name" value="NAD(P)-binding Rossmann-like Domain"/>
    <property type="match status" value="2"/>
</dbReference>
<dbReference type="InterPro" id="IPR008927">
    <property type="entry name" value="6-PGluconate_DH-like_C_sf"/>
</dbReference>
<dbReference type="InterPro" id="IPR036291">
    <property type="entry name" value="NAD(P)-bd_dom_sf"/>
</dbReference>
<dbReference type="InterPro" id="IPR017476">
    <property type="entry name" value="UDP-Glc/GDP-Man"/>
</dbReference>
<dbReference type="InterPro" id="IPR014027">
    <property type="entry name" value="UDP-Glc/GDP-Man_DH_C"/>
</dbReference>
<dbReference type="InterPro" id="IPR036220">
    <property type="entry name" value="UDP-Glc/GDP-Man_DH_C_sf"/>
</dbReference>
<dbReference type="InterPro" id="IPR014026">
    <property type="entry name" value="UDP-Glc/GDP-Man_DH_dimer"/>
</dbReference>
<dbReference type="InterPro" id="IPR001732">
    <property type="entry name" value="UDP-Glc/GDP-Man_DH_N"/>
</dbReference>
<dbReference type="InterPro" id="IPR028356">
    <property type="entry name" value="UDPglc_DH_euk"/>
</dbReference>
<dbReference type="NCBIfam" id="TIGR03026">
    <property type="entry name" value="NDP-sugDHase"/>
    <property type="match status" value="1"/>
</dbReference>
<dbReference type="PANTHER" id="PTHR11374:SF3">
    <property type="entry name" value="UDP-GLUCOSE 6-DEHYDROGENASE"/>
    <property type="match status" value="1"/>
</dbReference>
<dbReference type="PANTHER" id="PTHR11374">
    <property type="entry name" value="UDP-GLUCOSE DEHYDROGENASE/UDP-MANNAC DEHYDROGENASE"/>
    <property type="match status" value="1"/>
</dbReference>
<dbReference type="Pfam" id="PF00984">
    <property type="entry name" value="UDPG_MGDP_dh"/>
    <property type="match status" value="1"/>
</dbReference>
<dbReference type="Pfam" id="PF03720">
    <property type="entry name" value="UDPG_MGDP_dh_C"/>
    <property type="match status" value="1"/>
</dbReference>
<dbReference type="Pfam" id="PF03721">
    <property type="entry name" value="UDPG_MGDP_dh_N"/>
    <property type="match status" value="1"/>
</dbReference>
<dbReference type="PIRSF" id="PIRSF500133">
    <property type="entry name" value="UDPglc_DH_euk"/>
    <property type="match status" value="1"/>
</dbReference>
<dbReference type="PIRSF" id="PIRSF000124">
    <property type="entry name" value="UDPglc_GDPman_dh"/>
    <property type="match status" value="1"/>
</dbReference>
<dbReference type="SMART" id="SM00984">
    <property type="entry name" value="UDPG_MGDP_dh_C"/>
    <property type="match status" value="1"/>
</dbReference>
<dbReference type="SUPFAM" id="SSF48179">
    <property type="entry name" value="6-phosphogluconate dehydrogenase C-terminal domain-like"/>
    <property type="match status" value="1"/>
</dbReference>
<dbReference type="SUPFAM" id="SSF51735">
    <property type="entry name" value="NAD(P)-binding Rossmann-fold domains"/>
    <property type="match status" value="1"/>
</dbReference>
<dbReference type="SUPFAM" id="SSF52413">
    <property type="entry name" value="UDP-glucose/GDP-mannose dehydrogenase C-terminal domain"/>
    <property type="match status" value="1"/>
</dbReference>
<keyword id="KW-0002">3D-structure</keyword>
<keyword id="KW-0520">NAD</keyword>
<keyword id="KW-0560">Oxidoreductase</keyword>
<keyword id="KW-1185">Reference proteome</keyword>
<gene>
    <name type="primary">sqv-4</name>
    <name type="ORF">F29F11.1</name>
</gene>
<protein>
    <recommendedName>
        <fullName>UDP-glucose 6-dehydrogenase</fullName>
        <shortName>UDP-Glc dehydrogenase</shortName>
        <shortName>UDP-GlcDH</shortName>
        <shortName>UDPGDH</shortName>
        <ecNumber evidence="3">1.1.1.22</ecNumber>
    </recommendedName>
    <alternativeName>
        <fullName>Squashed vulva protein 4</fullName>
    </alternativeName>
</protein>
<organism>
    <name type="scientific">Caenorhabditis elegans</name>
    <dbReference type="NCBI Taxonomy" id="6239"/>
    <lineage>
        <taxon>Eukaryota</taxon>
        <taxon>Metazoa</taxon>
        <taxon>Ecdysozoa</taxon>
        <taxon>Nematoda</taxon>
        <taxon>Chromadorea</taxon>
        <taxon>Rhabditida</taxon>
        <taxon>Rhabditina</taxon>
        <taxon>Rhabditomorpha</taxon>
        <taxon>Rhabditoidea</taxon>
        <taxon>Rhabditidae</taxon>
        <taxon>Peloderinae</taxon>
        <taxon>Caenorhabditis</taxon>
    </lineage>
</organism>